<gene>
    <name type="primary">faeB-1</name>
    <name type="ORF">NFIA_047590</name>
</gene>
<accession>A1DKV3</accession>
<sequence length="525" mass="57678">MMRWFLLIGLASAAATDSSASFESRCQHFHKEIHLQNVHVHSTTYVPIGSNISMAYNPPICGGTSSSSISTIEFCQVALNVTTSDKSQFFMEAWLPSNYTGRFLSTGNGGLNGCVGYGDMIYASQYGFATIGTNNGHFGDTGQYFLNNPEVIEDFAYRALHTGTVVGKALTKLFYPQGYKNSYYLGCSTGGRQGWKSIQRFPDDFDGVVAGAPAFNFVNLCNWGSRFLKITGPPDSDTFVTSAQWSIIHNEIIRQCDALDGAVDGTIEDTDLCQPIFETLICNSTAVNKTSCLTGVQANTVNEVFSAMYGLDGKWLYPRMQPGSELAASFIYYSGNGFKYSDDWFKYVVYNDSNWDHSTWTLADAAAADAQDPFQISTFDGDISGFQKAGGKVLHYHGLEDAIITSDSSKAYYKHVADTMGLSPSDLDQFYRFFPISGMGHCSPGTGAASIGQGSSTYAGDDPQDNVLMAMVQWVEKGIAPEYVRGSKKSIDGQTEYRRKHCKYPKRNRYVGPGKYTDENAWKCV</sequence>
<comment type="function">
    <text evidence="3">Involved in degradation of plant cell walls. Hydrolyzes the feruloyl-arabinose ester bond in arabinoxylans as well as the feruloyl-galactose and feruloyl-arabinose ester bonds in pectin.</text>
</comment>
<comment type="catalytic activity">
    <reaction evidence="3">
        <text>feruloyl-polysaccharide + H2O = ferulate + polysaccharide.</text>
        <dbReference type="EC" id="3.1.1.73"/>
    </reaction>
</comment>
<comment type="subcellular location">
    <subcellularLocation>
        <location evidence="1">Secreted</location>
    </subcellularLocation>
</comment>
<comment type="similarity">
    <text evidence="5">Belongs to the tannase family.</text>
</comment>
<organism>
    <name type="scientific">Neosartorya fischeri (strain ATCC 1020 / DSM 3700 / CBS 544.65 / FGSC A1164 / JCM 1740 / NRRL 181 / WB 181)</name>
    <name type="common">Aspergillus fischerianus</name>
    <dbReference type="NCBI Taxonomy" id="331117"/>
    <lineage>
        <taxon>Eukaryota</taxon>
        <taxon>Fungi</taxon>
        <taxon>Dikarya</taxon>
        <taxon>Ascomycota</taxon>
        <taxon>Pezizomycotina</taxon>
        <taxon>Eurotiomycetes</taxon>
        <taxon>Eurotiomycetidae</taxon>
        <taxon>Eurotiales</taxon>
        <taxon>Aspergillaceae</taxon>
        <taxon>Aspergillus</taxon>
        <taxon>Aspergillus subgen. Fumigati</taxon>
    </lineage>
</organism>
<proteinExistence type="inferred from homology"/>
<keyword id="KW-0106">Calcium</keyword>
<keyword id="KW-0119">Carbohydrate metabolism</keyword>
<keyword id="KW-1015">Disulfide bond</keyword>
<keyword id="KW-0325">Glycoprotein</keyword>
<keyword id="KW-0378">Hydrolase</keyword>
<keyword id="KW-0479">Metal-binding</keyword>
<keyword id="KW-0624">Polysaccharide degradation</keyword>
<keyword id="KW-1185">Reference proteome</keyword>
<keyword id="KW-0964">Secreted</keyword>
<keyword id="KW-0719">Serine esterase</keyword>
<keyword id="KW-0732">Signal</keyword>
<keyword id="KW-0858">Xylan degradation</keyword>
<protein>
    <recommendedName>
        <fullName>Probable feruloyl esterase B-1</fullName>
        <ecNumber evidence="3">3.1.1.73</ecNumber>
    </recommendedName>
    <alternativeName>
        <fullName>Ferulic acid esterase B-1</fullName>
        <shortName>FAEB-1</shortName>
    </alternativeName>
</protein>
<name>FAEB1_NEOFI</name>
<reference key="1">
    <citation type="journal article" date="2008" name="PLoS Genet.">
        <title>Genomic islands in the pathogenic filamentous fungus Aspergillus fumigatus.</title>
        <authorList>
            <person name="Fedorova N.D."/>
            <person name="Khaldi N."/>
            <person name="Joardar V.S."/>
            <person name="Maiti R."/>
            <person name="Amedeo P."/>
            <person name="Anderson M.J."/>
            <person name="Crabtree J."/>
            <person name="Silva J.C."/>
            <person name="Badger J.H."/>
            <person name="Albarraq A."/>
            <person name="Angiuoli S."/>
            <person name="Bussey H."/>
            <person name="Bowyer P."/>
            <person name="Cotty P.J."/>
            <person name="Dyer P.S."/>
            <person name="Egan A."/>
            <person name="Galens K."/>
            <person name="Fraser-Liggett C.M."/>
            <person name="Haas B.J."/>
            <person name="Inman J.M."/>
            <person name="Kent R."/>
            <person name="Lemieux S."/>
            <person name="Malavazi I."/>
            <person name="Orvis J."/>
            <person name="Roemer T."/>
            <person name="Ronning C.M."/>
            <person name="Sundaram J.P."/>
            <person name="Sutton G."/>
            <person name="Turner G."/>
            <person name="Venter J.C."/>
            <person name="White O.R."/>
            <person name="Whitty B.R."/>
            <person name="Youngman P."/>
            <person name="Wolfe K.H."/>
            <person name="Goldman G.H."/>
            <person name="Wortman J.R."/>
            <person name="Jiang B."/>
            <person name="Denning D.W."/>
            <person name="Nierman W.C."/>
        </authorList>
    </citation>
    <scope>NUCLEOTIDE SEQUENCE [LARGE SCALE GENOMIC DNA]</scope>
    <source>
        <strain>ATCC 1020 / DSM 3700 / CBS 544.65 / FGSC A1164 / JCM 1740 / NRRL 181 / WB 181</strain>
    </source>
</reference>
<evidence type="ECO:0000250" key="1"/>
<evidence type="ECO:0000250" key="2">
    <source>
        <dbReference type="UniProtKB" id="Q2UP89"/>
    </source>
</evidence>
<evidence type="ECO:0000250" key="3">
    <source>
        <dbReference type="UniProtKB" id="Q8WZI8"/>
    </source>
</evidence>
<evidence type="ECO:0000255" key="4"/>
<evidence type="ECO:0000305" key="5"/>
<feature type="signal peptide" evidence="4">
    <location>
        <begin position="1"/>
        <end position="20"/>
    </location>
</feature>
<feature type="chain" id="PRO_0000394926" description="Probable feruloyl esterase B-1">
    <location>
        <begin position="21"/>
        <end position="525"/>
    </location>
</feature>
<feature type="active site" description="Acyl-ester intermediate" evidence="2">
    <location>
        <position position="188"/>
    </location>
</feature>
<feature type="active site" description="Charge relay system" evidence="2">
    <location>
        <position position="401"/>
    </location>
</feature>
<feature type="active site" description="Charge relay system" evidence="2">
    <location>
        <position position="441"/>
    </location>
</feature>
<feature type="binding site" evidence="2">
    <location>
        <position position="257"/>
    </location>
    <ligand>
        <name>Ca(2+)</name>
        <dbReference type="ChEBI" id="CHEBI:29108"/>
    </ligand>
</feature>
<feature type="binding site" evidence="2">
    <location>
        <position position="260"/>
    </location>
    <ligand>
        <name>Ca(2+)</name>
        <dbReference type="ChEBI" id="CHEBI:29108"/>
    </ligand>
</feature>
<feature type="binding site" evidence="2">
    <location>
        <position position="262"/>
    </location>
    <ligand>
        <name>Ca(2+)</name>
        <dbReference type="ChEBI" id="CHEBI:29108"/>
    </ligand>
</feature>
<feature type="binding site" evidence="2">
    <location>
        <position position="264"/>
    </location>
    <ligand>
        <name>Ca(2+)</name>
        <dbReference type="ChEBI" id="CHEBI:29108"/>
    </ligand>
</feature>
<feature type="glycosylation site" description="N-linked (GlcNAc...) asparagine" evidence="4">
    <location>
        <position position="51"/>
    </location>
</feature>
<feature type="glycosylation site" description="N-linked (GlcNAc...) asparagine" evidence="4">
    <location>
        <position position="80"/>
    </location>
</feature>
<feature type="glycosylation site" description="N-linked (GlcNAc...) asparagine" evidence="4">
    <location>
        <position position="98"/>
    </location>
</feature>
<feature type="glycosylation site" description="N-linked (GlcNAc...) asparagine" evidence="4">
    <location>
        <position position="283"/>
    </location>
</feature>
<feature type="glycosylation site" description="N-linked (GlcNAc...) asparagine" evidence="4">
    <location>
        <position position="288"/>
    </location>
</feature>
<feature type="glycosylation site" description="N-linked (GlcNAc...) asparagine" evidence="4">
    <location>
        <position position="351"/>
    </location>
</feature>
<feature type="disulfide bond" evidence="2">
    <location>
        <begin position="26"/>
        <end position="75"/>
    </location>
</feature>
<feature type="disulfide bond" evidence="2">
    <location>
        <begin position="61"/>
        <end position="114"/>
    </location>
</feature>
<feature type="disulfide bond" evidence="2">
    <location>
        <begin position="187"/>
        <end position="442"/>
    </location>
</feature>
<feature type="disulfide bond" evidence="2">
    <location>
        <begin position="256"/>
        <end position="273"/>
    </location>
</feature>
<feature type="disulfide bond" evidence="2">
    <location>
        <begin position="282"/>
        <end position="292"/>
    </location>
</feature>
<feature type="disulfide bond" evidence="2">
    <location>
        <begin position="502"/>
        <end position="524"/>
    </location>
</feature>
<dbReference type="EC" id="3.1.1.73" evidence="3"/>
<dbReference type="EMBL" id="DS027698">
    <property type="protein sequence ID" value="EAW15424.1"/>
    <property type="molecule type" value="Genomic_DNA"/>
</dbReference>
<dbReference type="RefSeq" id="XP_001257321.1">
    <property type="nucleotide sequence ID" value="XM_001257320.1"/>
</dbReference>
<dbReference type="SMR" id="A1DKV3"/>
<dbReference type="STRING" id="331117.A1DKV3"/>
<dbReference type="ESTHER" id="neofi-faeb1">
    <property type="family name" value="Tannase"/>
</dbReference>
<dbReference type="GlyCosmos" id="A1DKV3">
    <property type="glycosylation" value="6 sites, No reported glycans"/>
</dbReference>
<dbReference type="EnsemblFungi" id="EAW15424">
    <property type="protein sequence ID" value="EAW15424"/>
    <property type="gene ID" value="NFIA_047590"/>
</dbReference>
<dbReference type="GeneID" id="4583835"/>
<dbReference type="KEGG" id="nfi:NFIA_047590"/>
<dbReference type="VEuPathDB" id="FungiDB:NFIA_047590"/>
<dbReference type="eggNOG" id="ENOG502QPXZ">
    <property type="taxonomic scope" value="Eukaryota"/>
</dbReference>
<dbReference type="HOGENOM" id="CLU_014819_1_0_1"/>
<dbReference type="OMA" id="FMEAWLP"/>
<dbReference type="OrthoDB" id="3039123at2759"/>
<dbReference type="Proteomes" id="UP000006702">
    <property type="component" value="Unassembled WGS sequence"/>
</dbReference>
<dbReference type="GO" id="GO:0005576">
    <property type="term" value="C:extracellular region"/>
    <property type="evidence" value="ECO:0007669"/>
    <property type="project" value="UniProtKB-SubCell"/>
</dbReference>
<dbReference type="GO" id="GO:0030600">
    <property type="term" value="F:feruloyl esterase activity"/>
    <property type="evidence" value="ECO:0007669"/>
    <property type="project" value="UniProtKB-EC"/>
</dbReference>
<dbReference type="GO" id="GO:0046872">
    <property type="term" value="F:metal ion binding"/>
    <property type="evidence" value="ECO:0007669"/>
    <property type="project" value="UniProtKB-KW"/>
</dbReference>
<dbReference type="GO" id="GO:0045493">
    <property type="term" value="P:xylan catabolic process"/>
    <property type="evidence" value="ECO:0007669"/>
    <property type="project" value="UniProtKB-KW"/>
</dbReference>
<dbReference type="Gene3D" id="3.40.50.1820">
    <property type="entry name" value="alpha/beta hydrolase"/>
    <property type="match status" value="1"/>
</dbReference>
<dbReference type="InterPro" id="IPR029058">
    <property type="entry name" value="AB_hydrolase_fold"/>
</dbReference>
<dbReference type="InterPro" id="IPR011118">
    <property type="entry name" value="Tannase/feruloyl_esterase"/>
</dbReference>
<dbReference type="PANTHER" id="PTHR33938">
    <property type="entry name" value="FERULOYL ESTERASE B-RELATED"/>
    <property type="match status" value="1"/>
</dbReference>
<dbReference type="PANTHER" id="PTHR33938:SF15">
    <property type="entry name" value="FERULOYL ESTERASE B-RELATED"/>
    <property type="match status" value="1"/>
</dbReference>
<dbReference type="Pfam" id="PF07519">
    <property type="entry name" value="Tannase"/>
    <property type="match status" value="1"/>
</dbReference>
<dbReference type="SUPFAM" id="SSF53474">
    <property type="entry name" value="alpha/beta-Hydrolases"/>
    <property type="match status" value="1"/>
</dbReference>